<sequence length="305" mass="32542">MKETDSLTCSDLRPARKAPQTAIGQVLIEALPYIRKFERKTFVIKYGGSAMKDLCLKNSFAQNVTLLRKVGINVVLVHGGGDAITKTAEKLGITSTFVHGKRVTDKEMISVVQMTLAGKVNQDIVQLISEHGGKAVGVTGLDADTIQAVPCRDAATLGLVGEIESINTAYIDLLCKAGLIPVIAPIGFDDDGNIYNINADDAASSIAIALKAEKLIYVSDVAGIQVGERILKTICKAEAADFIEQGIITGGMIPKVLSGFLTLDGGVRKIHIIDGKSVHSLLLEIFTHEGVGTQFISEQDDESNH</sequence>
<evidence type="ECO:0000255" key="1">
    <source>
        <dbReference type="HAMAP-Rule" id="MF_00082"/>
    </source>
</evidence>
<accession>Q3B422</accession>
<protein>
    <recommendedName>
        <fullName evidence="1">Acetylglutamate kinase</fullName>
        <ecNumber evidence="1">2.7.2.8</ecNumber>
    </recommendedName>
    <alternativeName>
        <fullName evidence="1">N-acetyl-L-glutamate 5-phosphotransferase</fullName>
    </alternativeName>
    <alternativeName>
        <fullName evidence="1">NAG kinase</fullName>
        <shortName evidence="1">NAGK</shortName>
    </alternativeName>
</protein>
<name>ARGB_CHLL3</name>
<organism>
    <name type="scientific">Chlorobium luteolum (strain DSM 273 / BCRC 81028 / 2530)</name>
    <name type="common">Pelodictyon luteolum</name>
    <dbReference type="NCBI Taxonomy" id="319225"/>
    <lineage>
        <taxon>Bacteria</taxon>
        <taxon>Pseudomonadati</taxon>
        <taxon>Chlorobiota</taxon>
        <taxon>Chlorobiia</taxon>
        <taxon>Chlorobiales</taxon>
        <taxon>Chlorobiaceae</taxon>
        <taxon>Chlorobium/Pelodictyon group</taxon>
        <taxon>Pelodictyon</taxon>
    </lineage>
</organism>
<dbReference type="EC" id="2.7.2.8" evidence="1"/>
<dbReference type="EMBL" id="CP000096">
    <property type="protein sequence ID" value="ABB23909.1"/>
    <property type="molecule type" value="Genomic_DNA"/>
</dbReference>
<dbReference type="RefSeq" id="WP_011357781.1">
    <property type="nucleotide sequence ID" value="NC_007512.1"/>
</dbReference>
<dbReference type="SMR" id="Q3B422"/>
<dbReference type="STRING" id="319225.Plut_1047"/>
<dbReference type="KEGG" id="plt:Plut_1047"/>
<dbReference type="eggNOG" id="COG0548">
    <property type="taxonomic scope" value="Bacteria"/>
</dbReference>
<dbReference type="HOGENOM" id="CLU_053680_0_0_10"/>
<dbReference type="OrthoDB" id="9803155at2"/>
<dbReference type="UniPathway" id="UPA00068">
    <property type="reaction ID" value="UER00107"/>
</dbReference>
<dbReference type="Proteomes" id="UP000002709">
    <property type="component" value="Chromosome"/>
</dbReference>
<dbReference type="GO" id="GO:0005737">
    <property type="term" value="C:cytoplasm"/>
    <property type="evidence" value="ECO:0007669"/>
    <property type="project" value="UniProtKB-SubCell"/>
</dbReference>
<dbReference type="GO" id="GO:0003991">
    <property type="term" value="F:acetylglutamate kinase activity"/>
    <property type="evidence" value="ECO:0007669"/>
    <property type="project" value="UniProtKB-UniRule"/>
</dbReference>
<dbReference type="GO" id="GO:0005524">
    <property type="term" value="F:ATP binding"/>
    <property type="evidence" value="ECO:0007669"/>
    <property type="project" value="UniProtKB-UniRule"/>
</dbReference>
<dbReference type="GO" id="GO:0042450">
    <property type="term" value="P:arginine biosynthetic process via ornithine"/>
    <property type="evidence" value="ECO:0007669"/>
    <property type="project" value="UniProtKB-UniRule"/>
</dbReference>
<dbReference type="GO" id="GO:0006526">
    <property type="term" value="P:L-arginine biosynthetic process"/>
    <property type="evidence" value="ECO:0007669"/>
    <property type="project" value="UniProtKB-UniPathway"/>
</dbReference>
<dbReference type="CDD" id="cd04250">
    <property type="entry name" value="AAK_NAGK-C"/>
    <property type="match status" value="1"/>
</dbReference>
<dbReference type="FunFam" id="3.40.1160.10:FF:000004">
    <property type="entry name" value="Acetylglutamate kinase"/>
    <property type="match status" value="1"/>
</dbReference>
<dbReference type="Gene3D" id="3.40.1160.10">
    <property type="entry name" value="Acetylglutamate kinase-like"/>
    <property type="match status" value="1"/>
</dbReference>
<dbReference type="HAMAP" id="MF_00082">
    <property type="entry name" value="ArgB"/>
    <property type="match status" value="1"/>
</dbReference>
<dbReference type="InterPro" id="IPR036393">
    <property type="entry name" value="AceGlu_kinase-like_sf"/>
</dbReference>
<dbReference type="InterPro" id="IPR004662">
    <property type="entry name" value="AcgluKinase_fam"/>
</dbReference>
<dbReference type="InterPro" id="IPR037528">
    <property type="entry name" value="ArgB"/>
</dbReference>
<dbReference type="InterPro" id="IPR001048">
    <property type="entry name" value="Asp/Glu/Uridylate_kinase"/>
</dbReference>
<dbReference type="InterPro" id="IPR041727">
    <property type="entry name" value="NAGK-C"/>
</dbReference>
<dbReference type="NCBIfam" id="TIGR00761">
    <property type="entry name" value="argB"/>
    <property type="match status" value="1"/>
</dbReference>
<dbReference type="PANTHER" id="PTHR23342">
    <property type="entry name" value="N-ACETYLGLUTAMATE SYNTHASE"/>
    <property type="match status" value="1"/>
</dbReference>
<dbReference type="PANTHER" id="PTHR23342:SF0">
    <property type="entry name" value="N-ACETYLGLUTAMATE SYNTHASE, MITOCHONDRIAL"/>
    <property type="match status" value="1"/>
</dbReference>
<dbReference type="Pfam" id="PF00696">
    <property type="entry name" value="AA_kinase"/>
    <property type="match status" value="1"/>
</dbReference>
<dbReference type="PIRSF" id="PIRSF000728">
    <property type="entry name" value="NAGK"/>
    <property type="match status" value="1"/>
</dbReference>
<dbReference type="SUPFAM" id="SSF53633">
    <property type="entry name" value="Carbamate kinase-like"/>
    <property type="match status" value="1"/>
</dbReference>
<feature type="chain" id="PRO_0000264730" description="Acetylglutamate kinase">
    <location>
        <begin position="1"/>
        <end position="305"/>
    </location>
</feature>
<feature type="binding site" evidence="1">
    <location>
        <begin position="80"/>
        <end position="81"/>
    </location>
    <ligand>
        <name>substrate</name>
    </ligand>
</feature>
<feature type="binding site" evidence="1">
    <location>
        <position position="102"/>
    </location>
    <ligand>
        <name>substrate</name>
    </ligand>
</feature>
<feature type="binding site" evidence="1">
    <location>
        <position position="196"/>
    </location>
    <ligand>
        <name>substrate</name>
    </ligand>
</feature>
<feature type="site" description="Transition state stabilizer" evidence="1">
    <location>
        <position position="45"/>
    </location>
</feature>
<feature type="site" description="Transition state stabilizer" evidence="1">
    <location>
        <position position="255"/>
    </location>
</feature>
<reference key="1">
    <citation type="submission" date="2005-08" db="EMBL/GenBank/DDBJ databases">
        <title>Complete sequence of Pelodictyon luteolum DSM 273.</title>
        <authorList>
            <consortium name="US DOE Joint Genome Institute"/>
            <person name="Copeland A."/>
            <person name="Lucas S."/>
            <person name="Lapidus A."/>
            <person name="Barry K."/>
            <person name="Detter J.C."/>
            <person name="Glavina T."/>
            <person name="Hammon N."/>
            <person name="Israni S."/>
            <person name="Pitluck S."/>
            <person name="Bryant D."/>
            <person name="Schmutz J."/>
            <person name="Larimer F."/>
            <person name="Land M."/>
            <person name="Kyrpides N."/>
            <person name="Ivanova N."/>
            <person name="Richardson P."/>
        </authorList>
    </citation>
    <scope>NUCLEOTIDE SEQUENCE [LARGE SCALE GENOMIC DNA]</scope>
    <source>
        <strain>DSM 273 / BCRC 81028 / 2530</strain>
    </source>
</reference>
<keyword id="KW-0028">Amino-acid biosynthesis</keyword>
<keyword id="KW-0055">Arginine biosynthesis</keyword>
<keyword id="KW-0067">ATP-binding</keyword>
<keyword id="KW-0963">Cytoplasm</keyword>
<keyword id="KW-0418">Kinase</keyword>
<keyword id="KW-0547">Nucleotide-binding</keyword>
<keyword id="KW-1185">Reference proteome</keyword>
<keyword id="KW-0808">Transferase</keyword>
<comment type="function">
    <text evidence="1">Catalyzes the ATP-dependent phosphorylation of N-acetyl-L-glutamate.</text>
</comment>
<comment type="catalytic activity">
    <reaction evidence="1">
        <text>N-acetyl-L-glutamate + ATP = N-acetyl-L-glutamyl 5-phosphate + ADP</text>
        <dbReference type="Rhea" id="RHEA:14629"/>
        <dbReference type="ChEBI" id="CHEBI:30616"/>
        <dbReference type="ChEBI" id="CHEBI:44337"/>
        <dbReference type="ChEBI" id="CHEBI:57936"/>
        <dbReference type="ChEBI" id="CHEBI:456216"/>
        <dbReference type="EC" id="2.7.2.8"/>
    </reaction>
</comment>
<comment type="pathway">
    <text evidence="1">Amino-acid biosynthesis; L-arginine biosynthesis; N(2)-acetyl-L-ornithine from L-glutamate: step 2/4.</text>
</comment>
<comment type="subcellular location">
    <subcellularLocation>
        <location evidence="1">Cytoplasm</location>
    </subcellularLocation>
</comment>
<comment type="similarity">
    <text evidence="1">Belongs to the acetylglutamate kinase family. ArgB subfamily.</text>
</comment>
<proteinExistence type="inferred from homology"/>
<gene>
    <name evidence="1" type="primary">argB</name>
    <name type="ordered locus">Plut_1047</name>
</gene>